<comment type="function">
    <text evidence="1">Regulates the formation or stabilization of cell-cell contacts at several stages of epithelial morphogenesis. In early embryonic development, involved in ventral closure of the epidermis. During male tail morphogenesis, regulates precursor cell sorting together with mab-20 and allows the formation of distinct sensory rays. Probably acts as a ligand for lad-2 to regulate axon guidance of several neurons including SDQL, SDQR, SMD and PLN neurons during neurogenesis.</text>
</comment>
<comment type="subcellular location">
    <subcellularLocation>
        <location evidence="5">Cell membrane</location>
        <topology evidence="5">Lipid-anchor</topology>
        <topology evidence="5">GPI-anchor</topology>
    </subcellularLocation>
</comment>
<comment type="PTM">
    <text evidence="1">May undergo proteolysis by metalloprotease sup-17 to give rise to a soluble form.</text>
</comment>
<comment type="miscellaneous">
    <text evidence="1">In contrast to other ephrins, does not seem to signal through the vab-1 receptor.</text>
</comment>
<comment type="similarity">
    <text evidence="3">Belongs to the ephrin family.</text>
</comment>
<keyword id="KW-1003">Cell membrane</keyword>
<keyword id="KW-0217">Developmental protein</keyword>
<keyword id="KW-1015">Disulfide bond</keyword>
<keyword id="KW-0325">Glycoprotein</keyword>
<keyword id="KW-0336">GPI-anchor</keyword>
<keyword id="KW-0449">Lipoprotein</keyword>
<keyword id="KW-0472">Membrane</keyword>
<keyword id="KW-0524">Neurogenesis</keyword>
<keyword id="KW-1185">Reference proteome</keyword>
<keyword id="KW-0732">Signal</keyword>
<dbReference type="EMBL" id="HE601298">
    <property type="protein sequence ID" value="CAP22999.1"/>
    <property type="molecule type" value="Genomic_DNA"/>
</dbReference>
<dbReference type="SMR" id="Q624D2"/>
<dbReference type="FunCoup" id="Q624D2">
    <property type="interactions" value="30"/>
</dbReference>
<dbReference type="STRING" id="6238.Q624D2"/>
<dbReference type="GlyCosmos" id="Q624D2">
    <property type="glycosylation" value="1 site, No reported glycans"/>
</dbReference>
<dbReference type="EnsemblMetazoa" id="CBG01610.1">
    <property type="protein sequence ID" value="CBG01610.1"/>
    <property type="gene ID" value="WBGene00024824"/>
</dbReference>
<dbReference type="KEGG" id="cbr:CBG_01610"/>
<dbReference type="CTD" id="8576063"/>
<dbReference type="WormBase" id="CBG01610">
    <property type="protein sequence ID" value="CBP14187"/>
    <property type="gene ID" value="WBGene00024824"/>
    <property type="gene designation" value="Cbr-efn-4"/>
</dbReference>
<dbReference type="eggNOG" id="KOG3858">
    <property type="taxonomic scope" value="Eukaryota"/>
</dbReference>
<dbReference type="HOGENOM" id="CLU_779010_0_0_1"/>
<dbReference type="InParanoid" id="Q624D2"/>
<dbReference type="OMA" id="FVCPDNE"/>
<dbReference type="Proteomes" id="UP000008549">
    <property type="component" value="Unassembled WGS sequence"/>
</dbReference>
<dbReference type="GO" id="GO:0030424">
    <property type="term" value="C:axon"/>
    <property type="evidence" value="ECO:0007669"/>
    <property type="project" value="EnsemblMetazoa"/>
</dbReference>
<dbReference type="GO" id="GO:0043025">
    <property type="term" value="C:neuronal cell body"/>
    <property type="evidence" value="ECO:0007669"/>
    <property type="project" value="EnsemblMetazoa"/>
</dbReference>
<dbReference type="GO" id="GO:0005886">
    <property type="term" value="C:plasma membrane"/>
    <property type="evidence" value="ECO:0000318"/>
    <property type="project" value="GO_Central"/>
</dbReference>
<dbReference type="GO" id="GO:0098552">
    <property type="term" value="C:side of membrane"/>
    <property type="evidence" value="ECO:0007669"/>
    <property type="project" value="UniProtKB-KW"/>
</dbReference>
<dbReference type="GO" id="GO:0046875">
    <property type="term" value="F:ephrin receptor binding"/>
    <property type="evidence" value="ECO:0000318"/>
    <property type="project" value="GO_Central"/>
</dbReference>
<dbReference type="GO" id="GO:0007411">
    <property type="term" value="P:axon guidance"/>
    <property type="evidence" value="ECO:0000318"/>
    <property type="project" value="GO_Central"/>
</dbReference>
<dbReference type="GO" id="GO:0042074">
    <property type="term" value="P:cell migration involved in gastrulation"/>
    <property type="evidence" value="ECO:0007669"/>
    <property type="project" value="EnsemblMetazoa"/>
</dbReference>
<dbReference type="GO" id="GO:0009792">
    <property type="term" value="P:embryo development ending in birth or egg hatching"/>
    <property type="evidence" value="ECO:0007669"/>
    <property type="project" value="EnsemblMetazoa"/>
</dbReference>
<dbReference type="GO" id="GO:0048013">
    <property type="term" value="P:ephrin receptor signaling pathway"/>
    <property type="evidence" value="ECO:0000318"/>
    <property type="project" value="GO_Central"/>
</dbReference>
<dbReference type="GO" id="GO:0016331">
    <property type="term" value="P:morphogenesis of embryonic epithelium"/>
    <property type="evidence" value="ECO:0007669"/>
    <property type="project" value="EnsemblMetazoa"/>
</dbReference>
<dbReference type="GO" id="GO:0045138">
    <property type="term" value="P:nematode male tail tip morphogenesis"/>
    <property type="evidence" value="ECO:0007669"/>
    <property type="project" value="EnsemblMetazoa"/>
</dbReference>
<dbReference type="GO" id="GO:1902667">
    <property type="term" value="P:regulation of axon guidance"/>
    <property type="evidence" value="ECO:0007669"/>
    <property type="project" value="EnsemblMetazoa"/>
</dbReference>
<dbReference type="GO" id="GO:0030155">
    <property type="term" value="P:regulation of cell adhesion"/>
    <property type="evidence" value="ECO:0007669"/>
    <property type="project" value="EnsemblMetazoa"/>
</dbReference>
<dbReference type="CDD" id="cd02675">
    <property type="entry name" value="Ephrin_ectodomain"/>
    <property type="match status" value="1"/>
</dbReference>
<dbReference type="FunFam" id="2.60.40.420:FF:000122">
    <property type="entry name" value="Ephrin-4"/>
    <property type="match status" value="1"/>
</dbReference>
<dbReference type="Gene3D" id="2.60.40.420">
    <property type="entry name" value="Cupredoxins - blue copper proteins"/>
    <property type="match status" value="1"/>
</dbReference>
<dbReference type="InterPro" id="IPR008972">
    <property type="entry name" value="Cupredoxin"/>
</dbReference>
<dbReference type="InterPro" id="IPR031328">
    <property type="entry name" value="Ephrin"/>
</dbReference>
<dbReference type="InterPro" id="IPR001799">
    <property type="entry name" value="Ephrin_RBD"/>
</dbReference>
<dbReference type="PANTHER" id="PTHR11304">
    <property type="entry name" value="EPHRIN"/>
    <property type="match status" value="1"/>
</dbReference>
<dbReference type="PANTHER" id="PTHR11304:SF44">
    <property type="entry name" value="EPHRIN-4"/>
    <property type="match status" value="1"/>
</dbReference>
<dbReference type="Pfam" id="PF00812">
    <property type="entry name" value="Ephrin"/>
    <property type="match status" value="1"/>
</dbReference>
<dbReference type="PRINTS" id="PR01347">
    <property type="entry name" value="EPHRIN"/>
</dbReference>
<dbReference type="SUPFAM" id="SSF49503">
    <property type="entry name" value="Cupredoxins"/>
    <property type="match status" value="1"/>
</dbReference>
<dbReference type="PROSITE" id="PS51551">
    <property type="entry name" value="EPHRIN_RBD_2"/>
    <property type="match status" value="1"/>
</dbReference>
<feature type="signal peptide" evidence="2">
    <location>
        <begin position="1"/>
        <end position="22"/>
    </location>
</feature>
<feature type="chain" id="PRO_0000248548" description="Ephrin-4">
    <location>
        <begin position="23"/>
        <end position="335"/>
    </location>
</feature>
<feature type="propeptide" id="PRO_0000248549" description="Removed in mature form" evidence="2">
    <location>
        <begin position="336"/>
        <end position="354"/>
    </location>
</feature>
<feature type="domain" description="Ephrin RBD" evidence="3">
    <location>
        <begin position="23"/>
        <end position="173"/>
    </location>
</feature>
<feature type="region of interest" description="Disordered" evidence="4">
    <location>
        <begin position="173"/>
        <end position="196"/>
    </location>
</feature>
<feature type="compositionally biased region" description="Low complexity" evidence="4">
    <location>
        <begin position="175"/>
        <end position="186"/>
    </location>
</feature>
<feature type="lipid moiety-binding region" description="GPI-anchor amidated serine" evidence="2">
    <location>
        <position position="335"/>
    </location>
</feature>
<feature type="glycosylation site" description="N-linked (GlcNAc...) asparagine" evidence="2">
    <location>
        <position position="30"/>
    </location>
</feature>
<feature type="disulfide bond" evidence="3">
    <location>
        <begin position="55"/>
        <end position="92"/>
    </location>
</feature>
<feature type="disulfide bond" evidence="3">
    <location>
        <begin position="80"/>
        <end position="162"/>
    </location>
</feature>
<sequence>MKRPLDFLLAICLILLRSSTFADEHTVHWNSTNSMFRNRHPSIEVRLGDVVRFVCPDNEGRKNGEYLTVYEVSEFAMGECALESNSREVIKCGVDTNTEKIIRTHQLPIGESREPPKNVAQFIRSVNPIPNGKEYQPGQTYYYITTSSGKPGGIGQQMYGLCVSKNMRLSMKVLSSQPTPSPSSKPARSRTDARRQEDFITKSSAELMGGQEDEDSENDNAHLLPRDLEIATNPKFRRPSQFDQAAASAGVLDGQFLKVVQMAKEGKTGTFENDREVQKSAEKDAWDPINRHYVADLMNSAYKNANDRVVYQREPDFLIHEEDISTNSLGYSSSSSSSLPTFLIVFLIAVNLLF</sequence>
<evidence type="ECO:0000250" key="1">
    <source>
        <dbReference type="UniProtKB" id="O44516"/>
    </source>
</evidence>
<evidence type="ECO:0000255" key="2"/>
<evidence type="ECO:0000255" key="3">
    <source>
        <dbReference type="PROSITE-ProRule" id="PRU00884"/>
    </source>
</evidence>
<evidence type="ECO:0000256" key="4">
    <source>
        <dbReference type="SAM" id="MobiDB-lite"/>
    </source>
</evidence>
<evidence type="ECO:0000305" key="5"/>
<organism>
    <name type="scientific">Caenorhabditis briggsae</name>
    <dbReference type="NCBI Taxonomy" id="6238"/>
    <lineage>
        <taxon>Eukaryota</taxon>
        <taxon>Metazoa</taxon>
        <taxon>Ecdysozoa</taxon>
        <taxon>Nematoda</taxon>
        <taxon>Chromadorea</taxon>
        <taxon>Rhabditida</taxon>
        <taxon>Rhabditina</taxon>
        <taxon>Rhabditomorpha</taxon>
        <taxon>Rhabditoidea</taxon>
        <taxon>Rhabditidae</taxon>
        <taxon>Peloderinae</taxon>
        <taxon>Caenorhabditis</taxon>
    </lineage>
</organism>
<accession>Q624D2</accession>
<accession>A8WR91</accession>
<reference key="1">
    <citation type="journal article" date="2003" name="PLoS Biol.">
        <title>The genome sequence of Caenorhabditis briggsae: a platform for comparative genomics.</title>
        <authorList>
            <person name="Stein L.D."/>
            <person name="Bao Z."/>
            <person name="Blasiar D."/>
            <person name="Blumenthal T."/>
            <person name="Brent M.R."/>
            <person name="Chen N."/>
            <person name="Chinwalla A."/>
            <person name="Clarke L."/>
            <person name="Clee C."/>
            <person name="Coghlan A."/>
            <person name="Coulson A."/>
            <person name="D'Eustachio P."/>
            <person name="Fitch D.H.A."/>
            <person name="Fulton L.A."/>
            <person name="Fulton R.E."/>
            <person name="Griffiths-Jones S."/>
            <person name="Harris T.W."/>
            <person name="Hillier L.W."/>
            <person name="Kamath R."/>
            <person name="Kuwabara P.E."/>
            <person name="Mardis E.R."/>
            <person name="Marra M.A."/>
            <person name="Miner T.L."/>
            <person name="Minx P."/>
            <person name="Mullikin J.C."/>
            <person name="Plumb R.W."/>
            <person name="Rogers J."/>
            <person name="Schein J.E."/>
            <person name="Sohrmann M."/>
            <person name="Spieth J."/>
            <person name="Stajich J.E."/>
            <person name="Wei C."/>
            <person name="Willey D."/>
            <person name="Wilson R.K."/>
            <person name="Durbin R.M."/>
            <person name="Waterston R.H."/>
        </authorList>
    </citation>
    <scope>NUCLEOTIDE SEQUENCE [LARGE SCALE GENOMIC DNA]</scope>
    <source>
        <strain>AF16</strain>
    </source>
</reference>
<proteinExistence type="inferred from homology"/>
<gene>
    <name type="primary">efn-4</name>
    <name type="ORF">CBG01610</name>
</gene>
<protein>
    <recommendedName>
        <fullName>Ephrin-4</fullName>
    </recommendedName>
</protein>
<name>EFN4_CAEBR</name>